<proteinExistence type="inferred from homology"/>
<reference key="1">
    <citation type="journal article" date="2002" name="Nat. Genet.">
        <title>Genome sequence of the endocellular obligate symbiont of tsetse flies, Wigglesworthia glossinidia.</title>
        <authorList>
            <person name="Akman L."/>
            <person name="Yamashita A."/>
            <person name="Watanabe H."/>
            <person name="Oshima K."/>
            <person name="Shiba T."/>
            <person name="Hattori M."/>
            <person name="Aksoy S."/>
        </authorList>
    </citation>
    <scope>NUCLEOTIDE SEQUENCE [LARGE SCALE GENOMIC DNA]</scope>
</reference>
<comment type="function">
    <text evidence="1">An FAD assembly protein, which accelerates covalent attachment of the cofactor into other proteins. Plays an essential role in the assembly of succinate dehydrogenase (SDH, respiratory complex II), an enzyme complex that is a component of both the tricarboxylic acid cycle and the electron transport chain, and which couples the oxidation of succinate to fumarate with the reduction of ubiquinone (coenzyme Q) to ubiquinol. Required for flavinylation (covalent attachment of FAD) of the flavoprotein subunit SdhA of SDH and other flavinylated proteins as well.</text>
</comment>
<comment type="subcellular location">
    <subcellularLocation>
        <location evidence="1">Cytoplasm</location>
    </subcellularLocation>
</comment>
<comment type="similarity">
    <text evidence="2">Belongs to the SdhE FAD assembly factor family.</text>
</comment>
<name>SDHE_WIGBR</name>
<organism>
    <name type="scientific">Wigglesworthia glossinidia brevipalpis</name>
    <dbReference type="NCBI Taxonomy" id="36870"/>
    <lineage>
        <taxon>Bacteria</taxon>
        <taxon>Pseudomonadati</taxon>
        <taxon>Pseudomonadota</taxon>
        <taxon>Gammaproteobacteria</taxon>
        <taxon>Enterobacterales</taxon>
        <taxon>Erwiniaceae</taxon>
        <taxon>Wigglesworthia</taxon>
    </lineage>
</organism>
<accession>Q8D2B6</accession>
<evidence type="ECO:0000250" key="1">
    <source>
        <dbReference type="UniProtKB" id="G4V4G2"/>
    </source>
</evidence>
<evidence type="ECO:0000305" key="2"/>
<gene>
    <name type="primary">sdhE</name>
    <name type="ordered locus">WIGBR4380</name>
</gene>
<keyword id="KW-0143">Chaperone</keyword>
<keyword id="KW-0963">Cytoplasm</keyword>
<keyword id="KW-1185">Reference proteome</keyword>
<dbReference type="EMBL" id="BA000021">
    <property type="protein sequence ID" value="BAC24584.1"/>
    <property type="molecule type" value="Genomic_DNA"/>
</dbReference>
<dbReference type="SMR" id="Q8D2B6"/>
<dbReference type="STRING" id="36870.gene:10368941"/>
<dbReference type="KEGG" id="wbr:ygfY"/>
<dbReference type="eggNOG" id="COG2938">
    <property type="taxonomic scope" value="Bacteria"/>
</dbReference>
<dbReference type="HOGENOM" id="CLU_103054_2_2_6"/>
<dbReference type="OrthoDB" id="9180899at2"/>
<dbReference type="Proteomes" id="UP000000562">
    <property type="component" value="Chromosome"/>
</dbReference>
<dbReference type="GO" id="GO:0005737">
    <property type="term" value="C:cytoplasm"/>
    <property type="evidence" value="ECO:0007669"/>
    <property type="project" value="UniProtKB-SubCell"/>
</dbReference>
<dbReference type="GO" id="GO:0006105">
    <property type="term" value="P:succinate metabolic process"/>
    <property type="evidence" value="ECO:0007669"/>
    <property type="project" value="TreeGrafter"/>
</dbReference>
<dbReference type="Gene3D" id="1.10.150.250">
    <property type="entry name" value="Flavinator of succinate dehydrogenase"/>
    <property type="match status" value="1"/>
</dbReference>
<dbReference type="InterPro" id="IPR005631">
    <property type="entry name" value="SDH"/>
</dbReference>
<dbReference type="InterPro" id="IPR036714">
    <property type="entry name" value="SDH_sf"/>
</dbReference>
<dbReference type="InterPro" id="IPR050531">
    <property type="entry name" value="SdhE_FAD_assembly_factor"/>
</dbReference>
<dbReference type="PANTHER" id="PTHR39585">
    <property type="entry name" value="FAD ASSEMBLY FACTOR SDHE"/>
    <property type="match status" value="1"/>
</dbReference>
<dbReference type="PANTHER" id="PTHR39585:SF1">
    <property type="entry name" value="FAD ASSEMBLY FACTOR SDHE"/>
    <property type="match status" value="1"/>
</dbReference>
<dbReference type="Pfam" id="PF03937">
    <property type="entry name" value="Sdh5"/>
    <property type="match status" value="1"/>
</dbReference>
<dbReference type="SUPFAM" id="SSF109910">
    <property type="entry name" value="YgfY-like"/>
    <property type="match status" value="1"/>
</dbReference>
<sequence length="84" mass="10328">MKIKNKSMVYWSCRRGMLELDIIINNFFKKEFDFLSNKEKIFFVNMLSYDDIYLYKCLIFNYEPKNKKIKKIIKLIKRSSFSFS</sequence>
<feature type="chain" id="PRO_0000214430" description="FAD assembly factor SdhE">
    <location>
        <begin position="1"/>
        <end position="84"/>
    </location>
</feature>
<protein>
    <recommendedName>
        <fullName>FAD assembly factor SdhE</fullName>
    </recommendedName>
</protein>